<sequence length="190" mass="21116">MSLCINPSLIRQYLYCPMAAYYIAAGAPEPPTLRMQRGREIQQEAAQAAAKALGAERAEYSVHITAPPLCGTVDAVLWINGRPSPLEVKAAARPRRIPIHHKAQAAAYIAMVQRAYGRAVATAYIYYAESGQIAQIRMAKDLQELLNYAVSRLQQILQGKPPVLNPNPAKCQNCWYRKWCSHLPTTVEKI</sequence>
<comment type="function">
    <text evidence="1">CRISPR (clustered regularly interspaced short palindromic repeat) is an adaptive immune system that provides protection against mobile genetic elements (viruses, transposable elements and conjugative plasmids). CRISPR clusters contain sequences complementary to antecedent mobile elements and target invading nucleic acids. CRISPR clusters are transcribed and processed into CRISPR RNA (crRNA). This may be a 5' to 3' ssDNA exonuclease (By similarity).</text>
</comment>
<comment type="catalytic activity">
    <reaction evidence="1">
        <text>exonucleolytic cleavage in the 5'- to 3'-direction to yield nucleoside 3'-phosphates.</text>
        <dbReference type="EC" id="3.1.12.1"/>
    </reaction>
</comment>
<comment type="cofactor">
    <cofactor evidence="1">
        <name>Mg(2+)</name>
        <dbReference type="ChEBI" id="CHEBI:18420"/>
    </cofactor>
    <cofactor evidence="1">
        <name>Mn(2+)</name>
        <dbReference type="ChEBI" id="CHEBI:29035"/>
    </cofactor>
    <cofactor evidence="1">
        <name>Cu(2+)</name>
        <dbReference type="ChEBI" id="CHEBI:29036"/>
    </cofactor>
    <text evidence="1">Mg(2+) or Mn(2+) required for ssDNA cleavage activity. Can also utilise Cu(2+).</text>
</comment>
<comment type="cofactor">
    <cofactor evidence="1">
        <name>[4Fe-4S] cluster</name>
        <dbReference type="ChEBI" id="CHEBI:49883"/>
    </cofactor>
    <text evidence="1">Binds 1 [4Fe-4S] cluster per subunit. It may be important for protein stability, since mutation of the Cys that bind the cofactor leads to a colorless, insoluble protein.</text>
</comment>
<comment type="subunit">
    <text evidence="2">Can form a Cascis complex with Cas1/2 and Csa1.</text>
</comment>
<comment type="induction">
    <text evidence="2">Slightly induced by 20 J/m2 ultraviolet light. Member of the csa1-cas1/2-cas4 operon.</text>
</comment>
<comment type="similarity">
    <text evidence="3">Belongs to the CRISPR-associated exonuclease Cas4 family.</text>
</comment>
<gene>
    <name type="primary">cas4</name>
    <name type="ordered locus">TTX_1245</name>
</gene>
<reference key="1">
    <citation type="journal article" date="2011" name="PLoS ONE">
        <title>The complete genome sequence of Thermoproteus tenax: a physiologically versatile member of the Crenarchaeota.</title>
        <authorList>
            <person name="Siebers B."/>
            <person name="Zaparty M."/>
            <person name="Raddatz G."/>
            <person name="Tjaden B."/>
            <person name="Albers S.V."/>
            <person name="Bell S.D."/>
            <person name="Blombach F."/>
            <person name="Kletzin A."/>
            <person name="Kyrpides N."/>
            <person name="Lanz C."/>
            <person name="Plagens A."/>
            <person name="Rampp M."/>
            <person name="Rosinus A."/>
            <person name="von Jan M."/>
            <person name="Makarova K.S."/>
            <person name="Klenk H.P."/>
            <person name="Schuster S.C."/>
            <person name="Hensel R."/>
        </authorList>
    </citation>
    <scope>NUCLEOTIDE SEQUENCE [LARGE SCALE GENOMIC DNA]</scope>
    <source>
        <strain>ATCC 35583 / DSM 2078 / JCM 9277 / NBRC 100435 / Kra 1</strain>
    </source>
</reference>
<reference key="2">
    <citation type="journal article" date="2012" name="J. Bacteriol.">
        <title>Characterization of the CRISPR/Cas subtype I-A system of the hyperthermophilic crenarchaeon Thermoproteus tenax.</title>
        <authorList>
            <person name="Plagens A."/>
            <person name="Tjaden B."/>
            <person name="Hagemann A."/>
            <person name="Randau L."/>
            <person name="Hensel R."/>
        </authorList>
    </citation>
    <scope>SUBUNIT</scope>
    <scope>INDUCTION</scope>
    <scope>OPERON STRUCTURE</scope>
    <source>
        <strain>ATCC 35583 / DSM 2078 / JCM 9277 / NBRC 100435 / Kra 1</strain>
    </source>
</reference>
<keyword id="KW-0004">4Fe-4S</keyword>
<keyword id="KW-0051">Antiviral defense</keyword>
<keyword id="KW-0269">Exonuclease</keyword>
<keyword id="KW-0378">Hydrolase</keyword>
<keyword id="KW-0408">Iron</keyword>
<keyword id="KW-0411">Iron-sulfur</keyword>
<keyword id="KW-0464">Manganese</keyword>
<keyword id="KW-0479">Metal-binding</keyword>
<keyword id="KW-0540">Nuclease</keyword>
<keyword id="KW-1185">Reference proteome</keyword>
<evidence type="ECO:0000250" key="1">
    <source>
        <dbReference type="UniProtKB" id="Q97TX9"/>
    </source>
</evidence>
<evidence type="ECO:0000269" key="2">
    <source>
    </source>
</evidence>
<evidence type="ECO:0000305" key="3"/>
<name>CAS4_THETK</name>
<protein>
    <recommendedName>
        <fullName>CRISPR-associated exonuclease Cas4</fullName>
        <ecNumber evidence="1">3.1.12.1</ecNumber>
    </recommendedName>
</protein>
<accession>G4RJY5</accession>
<organism>
    <name type="scientific">Thermoproteus tenax (strain ATCC 35583 / DSM 2078 / JCM 9277 / NBRC 100435 / Kra 1)</name>
    <dbReference type="NCBI Taxonomy" id="768679"/>
    <lineage>
        <taxon>Archaea</taxon>
        <taxon>Thermoproteota</taxon>
        <taxon>Thermoprotei</taxon>
        <taxon>Thermoproteales</taxon>
        <taxon>Thermoproteaceae</taxon>
        <taxon>Thermoproteus</taxon>
    </lineage>
</organism>
<dbReference type="EC" id="3.1.12.1" evidence="1"/>
<dbReference type="EMBL" id="FN869859">
    <property type="protein sequence ID" value="CCC81880.1"/>
    <property type="molecule type" value="Genomic_DNA"/>
</dbReference>
<dbReference type="RefSeq" id="WP_014127135.1">
    <property type="nucleotide sequence ID" value="NC_016070.1"/>
</dbReference>
<dbReference type="SMR" id="G4RJY5"/>
<dbReference type="STRING" id="768679.TTX_1245"/>
<dbReference type="PaxDb" id="768679-TTX_1245"/>
<dbReference type="GeneID" id="11262125"/>
<dbReference type="KEGG" id="ttn:TTX_1245"/>
<dbReference type="PATRIC" id="fig|768679.9.peg.1258"/>
<dbReference type="eggNOG" id="arCOG00786">
    <property type="taxonomic scope" value="Archaea"/>
</dbReference>
<dbReference type="HOGENOM" id="CLU_102055_2_0_2"/>
<dbReference type="OrthoDB" id="26676at2157"/>
<dbReference type="Proteomes" id="UP000002654">
    <property type="component" value="Chromosome"/>
</dbReference>
<dbReference type="GO" id="GO:0051539">
    <property type="term" value="F:4 iron, 4 sulfur cluster binding"/>
    <property type="evidence" value="ECO:0000250"/>
    <property type="project" value="UniProtKB"/>
</dbReference>
<dbReference type="GO" id="GO:0030145">
    <property type="term" value="F:manganese ion binding"/>
    <property type="evidence" value="ECO:0000250"/>
    <property type="project" value="UniProtKB"/>
</dbReference>
<dbReference type="GO" id="GO:0045145">
    <property type="term" value="F:single-stranded DNA 5'-3' DNA exonuclease activity"/>
    <property type="evidence" value="ECO:0000250"/>
    <property type="project" value="UniProtKB"/>
</dbReference>
<dbReference type="GO" id="GO:0051607">
    <property type="term" value="P:defense response to virus"/>
    <property type="evidence" value="ECO:0007669"/>
    <property type="project" value="UniProtKB-KW"/>
</dbReference>
<dbReference type="GO" id="GO:0006308">
    <property type="term" value="P:DNA catabolic process"/>
    <property type="evidence" value="ECO:0000250"/>
    <property type="project" value="UniProtKB"/>
</dbReference>
<dbReference type="FunFam" id="3.90.320.10:FF:000050">
    <property type="entry name" value="CRISPR-associated exonuclease Cas4"/>
    <property type="match status" value="1"/>
</dbReference>
<dbReference type="Gene3D" id="3.90.320.10">
    <property type="match status" value="1"/>
</dbReference>
<dbReference type="InterPro" id="IPR051827">
    <property type="entry name" value="Cas4_exonuclease"/>
</dbReference>
<dbReference type="InterPro" id="IPR013343">
    <property type="entry name" value="CRISPR-assoc_prot_Cas4"/>
</dbReference>
<dbReference type="InterPro" id="IPR022765">
    <property type="entry name" value="Dna2/Cas4_DUF83"/>
</dbReference>
<dbReference type="InterPro" id="IPR011604">
    <property type="entry name" value="PDDEXK-like_dom_sf"/>
</dbReference>
<dbReference type="NCBIfam" id="TIGR00372">
    <property type="entry name" value="cas4"/>
    <property type="match status" value="1"/>
</dbReference>
<dbReference type="PANTHER" id="PTHR36531">
    <property type="entry name" value="CRISPR-ASSOCIATED EXONUCLEASE CAS4"/>
    <property type="match status" value="1"/>
</dbReference>
<dbReference type="PANTHER" id="PTHR36531:SF6">
    <property type="entry name" value="DNA REPLICATION ATP-DEPENDENT HELICASE_NUCLEASE DNA2"/>
    <property type="match status" value="1"/>
</dbReference>
<dbReference type="Pfam" id="PF01930">
    <property type="entry name" value="Cas_Cas4"/>
    <property type="match status" value="1"/>
</dbReference>
<feature type="chain" id="PRO_0000422225" description="CRISPR-associated exonuclease Cas4">
    <location>
        <begin position="1"/>
        <end position="190"/>
    </location>
</feature>
<feature type="binding site" evidence="1">
    <location>
        <position position="16"/>
    </location>
    <ligand>
        <name>[4Fe-4S] cluster</name>
        <dbReference type="ChEBI" id="CHEBI:49883"/>
    </ligand>
</feature>
<feature type="binding site" evidence="1">
    <location>
        <position position="74"/>
    </location>
    <ligand>
        <name>Mn(2+)</name>
        <dbReference type="ChEBI" id="CHEBI:29035"/>
    </ligand>
</feature>
<feature type="binding site" evidence="1">
    <location>
        <position position="87"/>
    </location>
    <ligand>
        <name>Mn(2+)</name>
        <dbReference type="ChEBI" id="CHEBI:29035"/>
    </ligand>
</feature>
<feature type="binding site" evidence="1">
    <location>
        <position position="88"/>
    </location>
    <ligand>
        <name>Mn(2+)</name>
        <dbReference type="ChEBI" id="CHEBI:29035"/>
    </ligand>
</feature>
<feature type="binding site" evidence="1">
    <location>
        <position position="171"/>
    </location>
    <ligand>
        <name>[4Fe-4S] cluster</name>
        <dbReference type="ChEBI" id="CHEBI:49883"/>
    </ligand>
</feature>
<feature type="binding site" evidence="1">
    <location>
        <position position="174"/>
    </location>
    <ligand>
        <name>[4Fe-4S] cluster</name>
        <dbReference type="ChEBI" id="CHEBI:49883"/>
    </ligand>
</feature>
<feature type="binding site" evidence="1">
    <location>
        <position position="180"/>
    </location>
    <ligand>
        <name>[4Fe-4S] cluster</name>
        <dbReference type="ChEBI" id="CHEBI:49883"/>
    </ligand>
</feature>
<proteinExistence type="evidence at protein level"/>